<gene>
    <name evidence="6" type="primary">OTU11</name>
    <name evidence="9" type="ordered locus">At3g22260</name>
    <name evidence="10" type="ORF">MMP21.4</name>
</gene>
<reference key="1">
    <citation type="journal article" date="2014" name="Front. Plant Sci.">
        <title>Distinct phylogenetic relationships and biochemical properties of Arabidopsis ovarian tumor-related deubiquitinases support their functional differentiation.</title>
        <authorList>
            <person name="Radjacommare R."/>
            <person name="Usharani R."/>
            <person name="Kuo C.-H."/>
            <person name="Fu H."/>
        </authorList>
    </citation>
    <scope>NUCLEOTIDE SEQUENCE [MRNA] (ISOFORMS 1 AND 2)</scope>
    <scope>FUNCTION</scope>
    <scope>GENE FAMILY</scope>
    <scope>NOMENCLATURE</scope>
    <source>
        <strain>cv. Columbia</strain>
    </source>
</reference>
<reference key="2">
    <citation type="journal article" date="2000" name="DNA Res.">
        <title>Structural analysis of Arabidopsis thaliana chromosome 3. II. Sequence features of the 4,251,695 bp regions covered by 90 P1, TAC and BAC clones.</title>
        <authorList>
            <person name="Kaneko T."/>
            <person name="Katoh T."/>
            <person name="Sato S."/>
            <person name="Nakamura Y."/>
            <person name="Asamizu E."/>
            <person name="Tabata S."/>
        </authorList>
    </citation>
    <scope>NUCLEOTIDE SEQUENCE [LARGE SCALE GENOMIC DNA]</scope>
    <source>
        <strain>cv. Columbia</strain>
    </source>
</reference>
<reference key="3">
    <citation type="journal article" date="2017" name="Plant J.">
        <title>Araport11: a complete reannotation of the Arabidopsis thaliana reference genome.</title>
        <authorList>
            <person name="Cheng C.Y."/>
            <person name="Krishnakumar V."/>
            <person name="Chan A.P."/>
            <person name="Thibaud-Nissen F."/>
            <person name="Schobel S."/>
            <person name="Town C.D."/>
        </authorList>
    </citation>
    <scope>GENOME REANNOTATION</scope>
    <source>
        <strain>cv. Columbia</strain>
    </source>
</reference>
<reference key="4">
    <citation type="submission" date="2006-08" db="EMBL/GenBank/DDBJ databases">
        <title>Arabidopsis ORF clones.</title>
        <authorList>
            <person name="Bautista V.R."/>
            <person name="Kim C.J."/>
            <person name="Chen H."/>
            <person name="Quinitio C."/>
            <person name="Ecker J.R."/>
        </authorList>
    </citation>
    <scope>NUCLEOTIDE SEQUENCE [LARGE SCALE MRNA] (ISOFORM 1)</scope>
    <source>
        <strain>cv. Columbia</strain>
    </source>
</reference>
<reference key="5">
    <citation type="submission" date="2002-03" db="EMBL/GenBank/DDBJ databases">
        <title>Full-length cDNA from Arabidopsis thaliana.</title>
        <authorList>
            <person name="Brover V.V."/>
            <person name="Troukhan M.E."/>
            <person name="Alexandrov N.A."/>
            <person name="Lu Y.-P."/>
            <person name="Flavell R.B."/>
            <person name="Feldmann K.A."/>
        </authorList>
    </citation>
    <scope>NUCLEOTIDE SEQUENCE [LARGE SCALE MRNA] (ISOFORM 2)</scope>
</reference>
<protein>
    <recommendedName>
        <fullName evidence="6">OVARIAN TUMOR DOMAIN-containing deubiquitinating enzyme 11</fullName>
        <shortName evidence="6">OTU domain-containing protein 11</shortName>
        <ecNumber evidence="1">3.4.19.12</ecNumber>
    </recommendedName>
    <alternativeName>
        <fullName evidence="6">Deubiquitinating enzyme OTU11</fullName>
    </alternativeName>
</protein>
<name>OTU11_ARATH</name>
<keyword id="KW-0025">Alternative splicing</keyword>
<keyword id="KW-0378">Hydrolase</keyword>
<keyword id="KW-1185">Reference proteome</keyword>
<keyword id="KW-0833">Ubl conjugation pathway</keyword>
<feature type="chain" id="PRO_0000447761" description="OVARIAN TUMOR DOMAIN-containing deubiquitinating enzyme 11">
    <location>
        <begin position="1"/>
        <end position="245"/>
    </location>
</feature>
<feature type="domain" description="OTU" evidence="3">
    <location>
        <begin position="101"/>
        <end position="225"/>
    </location>
</feature>
<feature type="region of interest" description="Disordered" evidence="4">
    <location>
        <begin position="1"/>
        <end position="37"/>
    </location>
</feature>
<feature type="compositionally biased region" description="Low complexity" evidence="4">
    <location>
        <begin position="10"/>
        <end position="35"/>
    </location>
</feature>
<feature type="active site" evidence="2">
    <location>
        <position position="109"/>
    </location>
</feature>
<feature type="active site" description="Nucleophile" evidence="1">
    <location>
        <position position="112"/>
    </location>
</feature>
<feature type="active site" evidence="1">
    <location>
        <position position="218"/>
    </location>
</feature>
<feature type="splice variant" id="VSP_060267" description="In isoform 2.">
    <location>
        <begin position="227"/>
        <end position="231"/>
    </location>
</feature>
<feature type="sequence conflict" description="In Ref. 5; AAM61570." evidence="7" ref="5">
    <original>D</original>
    <variation>N</variation>
    <location>
        <position position="84"/>
    </location>
</feature>
<comment type="function">
    <text evidence="5 8">Hydrolase that can remove conjugated ubiquitin from proteins in vitro and may therefore play an important regulatory role at the level of protein turnover by preventing degradation (Probable). Inactive cysteine protease (PubMed:24659992).</text>
</comment>
<comment type="catalytic activity">
    <reaction evidence="1">
        <text>Thiol-dependent hydrolysis of ester, thioester, amide, peptide and isopeptide bonds formed by the C-terminal Gly of ubiquitin (a 76-residue protein attached to proteins as an intracellular targeting signal).</text>
        <dbReference type="EC" id="3.4.19.12"/>
    </reaction>
</comment>
<comment type="alternative products">
    <event type="alternative splicing"/>
    <isoform>
        <id>Q0V869-1</id>
        <name>1</name>
        <name evidence="6">OTU11a</name>
        <sequence type="displayed"/>
    </isoform>
    <isoform>
        <id>Q0V869-2</id>
        <name>2</name>
        <name evidence="6">OTU11b</name>
        <sequence type="described" ref="VSP_060267"/>
    </isoform>
</comment>
<comment type="similarity">
    <text evidence="7">Belongs to the peptidase C85 family.</text>
</comment>
<comment type="sequence caution" evidence="7">
    <conflict type="erroneous gene model prediction">
        <sequence resource="EMBL-CDS" id="BAB01944"/>
    </conflict>
</comment>
<organism>
    <name type="scientific">Arabidopsis thaliana</name>
    <name type="common">Mouse-ear cress</name>
    <dbReference type="NCBI Taxonomy" id="3702"/>
    <lineage>
        <taxon>Eukaryota</taxon>
        <taxon>Viridiplantae</taxon>
        <taxon>Streptophyta</taxon>
        <taxon>Embryophyta</taxon>
        <taxon>Tracheophyta</taxon>
        <taxon>Spermatophyta</taxon>
        <taxon>Magnoliopsida</taxon>
        <taxon>eudicotyledons</taxon>
        <taxon>Gunneridae</taxon>
        <taxon>Pentapetalae</taxon>
        <taxon>rosids</taxon>
        <taxon>malvids</taxon>
        <taxon>Brassicales</taxon>
        <taxon>Brassicaceae</taxon>
        <taxon>Camelineae</taxon>
        <taxon>Arabidopsis</taxon>
    </lineage>
</organism>
<proteinExistence type="evidence at transcript level"/>
<accession>Q0V869</accession>
<accession>A0A178VDZ2</accession>
<accession>A0A178VG73</accession>
<accession>F4J076</accession>
<accession>Q8LF73</accession>
<accession>Q9LHJ1</accession>
<evidence type="ECO:0000250" key="1">
    <source>
        <dbReference type="UniProtKB" id="Q96G74"/>
    </source>
</evidence>
<evidence type="ECO:0000255" key="2"/>
<evidence type="ECO:0000255" key="3">
    <source>
        <dbReference type="PROSITE-ProRule" id="PRU00139"/>
    </source>
</evidence>
<evidence type="ECO:0000256" key="4">
    <source>
        <dbReference type="SAM" id="MobiDB-lite"/>
    </source>
</evidence>
<evidence type="ECO:0000269" key="5">
    <source>
    </source>
</evidence>
<evidence type="ECO:0000303" key="6">
    <source>
    </source>
</evidence>
<evidence type="ECO:0000305" key="7"/>
<evidence type="ECO:0000305" key="8">
    <source>
    </source>
</evidence>
<evidence type="ECO:0000312" key="9">
    <source>
        <dbReference type="Araport" id="AT3G22260"/>
    </source>
</evidence>
<evidence type="ECO:0000312" key="10">
    <source>
        <dbReference type="EMBL" id="BAB01944.1"/>
    </source>
</evidence>
<dbReference type="EC" id="3.4.19.12" evidence="1"/>
<dbReference type="EMBL" id="JQ013457">
    <property type="protein sequence ID" value="AFS88959.1"/>
    <property type="molecule type" value="mRNA"/>
</dbReference>
<dbReference type="EMBL" id="JQ013458">
    <property type="protein sequence ID" value="AFS88960.1"/>
    <property type="molecule type" value="mRNA"/>
</dbReference>
<dbReference type="EMBL" id="AP002046">
    <property type="protein sequence ID" value="BAB01944.1"/>
    <property type="status" value="ALT_SEQ"/>
    <property type="molecule type" value="Genomic_DNA"/>
</dbReference>
<dbReference type="EMBL" id="CP002686">
    <property type="protein sequence ID" value="AEE76613.1"/>
    <property type="molecule type" value="Genomic_DNA"/>
</dbReference>
<dbReference type="EMBL" id="CP002686">
    <property type="protein sequence ID" value="AEE76614.1"/>
    <property type="molecule type" value="Genomic_DNA"/>
</dbReference>
<dbReference type="EMBL" id="CP002686">
    <property type="protein sequence ID" value="AEE76615.1"/>
    <property type="molecule type" value="Genomic_DNA"/>
</dbReference>
<dbReference type="EMBL" id="CP002686">
    <property type="protein sequence ID" value="ANM64660.1"/>
    <property type="molecule type" value="Genomic_DNA"/>
</dbReference>
<dbReference type="EMBL" id="CP002686">
    <property type="protein sequence ID" value="ANM64661.1"/>
    <property type="molecule type" value="Genomic_DNA"/>
</dbReference>
<dbReference type="EMBL" id="CP002686">
    <property type="protein sequence ID" value="ANM64662.1"/>
    <property type="molecule type" value="Genomic_DNA"/>
</dbReference>
<dbReference type="EMBL" id="BT026351">
    <property type="protein sequence ID" value="ABH04458.1"/>
    <property type="molecule type" value="mRNA"/>
</dbReference>
<dbReference type="EMBL" id="AY085012">
    <property type="protein sequence ID" value="AAM61570.1"/>
    <property type="molecule type" value="mRNA"/>
</dbReference>
<dbReference type="RefSeq" id="NP_001189948.1">
    <molecule id="Q0V869-1"/>
    <property type="nucleotide sequence ID" value="NM_001203019.2"/>
</dbReference>
<dbReference type="RefSeq" id="NP_001326673.1">
    <molecule id="Q0V869-1"/>
    <property type="nucleotide sequence ID" value="NM_001338577.1"/>
</dbReference>
<dbReference type="RefSeq" id="NP_001326674.1">
    <molecule id="Q0V869-1"/>
    <property type="nucleotide sequence ID" value="NM_001338575.1"/>
</dbReference>
<dbReference type="RefSeq" id="NP_001326675.1">
    <molecule id="Q0V869-1"/>
    <property type="nucleotide sequence ID" value="NM_001338576.1"/>
</dbReference>
<dbReference type="RefSeq" id="NP_566704.1">
    <molecule id="Q0V869-2"/>
    <property type="nucleotide sequence ID" value="NM_113124.3"/>
</dbReference>
<dbReference type="RefSeq" id="NP_974352.1">
    <molecule id="Q0V869-1"/>
    <property type="nucleotide sequence ID" value="NM_202623.4"/>
</dbReference>
<dbReference type="SMR" id="Q0V869"/>
<dbReference type="FunCoup" id="Q0V869">
    <property type="interactions" value="88"/>
</dbReference>
<dbReference type="IntAct" id="Q0V869">
    <property type="interactions" value="4"/>
</dbReference>
<dbReference type="STRING" id="3702.Q0V869"/>
<dbReference type="MEROPS" id="C85.A01"/>
<dbReference type="iPTMnet" id="Q0V869"/>
<dbReference type="PaxDb" id="3702-AT3G22260.2"/>
<dbReference type="ProteomicsDB" id="183018"/>
<dbReference type="ProteomicsDB" id="185679">
    <molecule id="Q0V869-1"/>
</dbReference>
<dbReference type="EnsemblPlants" id="AT3G22260.1">
    <molecule id="Q0V869-2"/>
    <property type="protein sequence ID" value="AT3G22260.1"/>
    <property type="gene ID" value="AT3G22260"/>
</dbReference>
<dbReference type="EnsemblPlants" id="AT3G22260.2">
    <molecule id="Q0V869-1"/>
    <property type="protein sequence ID" value="AT3G22260.2"/>
    <property type="gene ID" value="AT3G22260"/>
</dbReference>
<dbReference type="EnsemblPlants" id="AT3G22260.3">
    <molecule id="Q0V869-1"/>
    <property type="protein sequence ID" value="AT3G22260.3"/>
    <property type="gene ID" value="AT3G22260"/>
</dbReference>
<dbReference type="EnsemblPlants" id="AT3G22260.4">
    <molecule id="Q0V869-1"/>
    <property type="protein sequence ID" value="AT3G22260.4"/>
    <property type="gene ID" value="AT3G22260"/>
</dbReference>
<dbReference type="EnsemblPlants" id="AT3G22260.5">
    <molecule id="Q0V869-1"/>
    <property type="protein sequence ID" value="AT3G22260.5"/>
    <property type="gene ID" value="AT3G22260"/>
</dbReference>
<dbReference type="EnsemblPlants" id="AT3G22260.6">
    <molecule id="Q0V869-1"/>
    <property type="protein sequence ID" value="AT3G22260.6"/>
    <property type="gene ID" value="AT3G22260"/>
</dbReference>
<dbReference type="GeneID" id="821796"/>
<dbReference type="Gramene" id="AT3G22260.1">
    <molecule id="Q0V869-2"/>
    <property type="protein sequence ID" value="AT3G22260.1"/>
    <property type="gene ID" value="AT3G22260"/>
</dbReference>
<dbReference type="Gramene" id="AT3G22260.2">
    <molecule id="Q0V869-1"/>
    <property type="protein sequence ID" value="AT3G22260.2"/>
    <property type="gene ID" value="AT3G22260"/>
</dbReference>
<dbReference type="Gramene" id="AT3G22260.3">
    <molecule id="Q0V869-1"/>
    <property type="protein sequence ID" value="AT3G22260.3"/>
    <property type="gene ID" value="AT3G22260"/>
</dbReference>
<dbReference type="Gramene" id="AT3G22260.4">
    <molecule id="Q0V869-1"/>
    <property type="protein sequence ID" value="AT3G22260.4"/>
    <property type="gene ID" value="AT3G22260"/>
</dbReference>
<dbReference type="Gramene" id="AT3G22260.5">
    <molecule id="Q0V869-1"/>
    <property type="protein sequence ID" value="AT3G22260.5"/>
    <property type="gene ID" value="AT3G22260"/>
</dbReference>
<dbReference type="Gramene" id="AT3G22260.6">
    <molecule id="Q0V869-1"/>
    <property type="protein sequence ID" value="AT3G22260.6"/>
    <property type="gene ID" value="AT3G22260"/>
</dbReference>
<dbReference type="KEGG" id="ath:AT3G22260"/>
<dbReference type="Araport" id="AT3G22260"/>
<dbReference type="TAIR" id="AT3G22260"/>
<dbReference type="eggNOG" id="KOG2605">
    <property type="taxonomic scope" value="Eukaryota"/>
</dbReference>
<dbReference type="HOGENOM" id="CLU_044001_2_1_1"/>
<dbReference type="InParanoid" id="Q0V869"/>
<dbReference type="OMA" id="YYGNSRA"/>
<dbReference type="OrthoDB" id="415023at2759"/>
<dbReference type="PhylomeDB" id="Q0V869"/>
<dbReference type="PRO" id="PR:Q0V869"/>
<dbReference type="Proteomes" id="UP000006548">
    <property type="component" value="Chromosome 3"/>
</dbReference>
<dbReference type="ExpressionAtlas" id="Q0V869">
    <property type="expression patterns" value="baseline and differential"/>
</dbReference>
<dbReference type="GO" id="GO:0004843">
    <property type="term" value="F:cysteine-type deubiquitinase activity"/>
    <property type="evidence" value="ECO:0007669"/>
    <property type="project" value="UniProtKB-EC"/>
</dbReference>
<dbReference type="CDD" id="cd22751">
    <property type="entry name" value="OTU_plant_OTU9-like"/>
    <property type="match status" value="1"/>
</dbReference>
<dbReference type="FunFam" id="3.90.70.80:FF:000001">
    <property type="entry name" value="OTU domain-containing protein"/>
    <property type="match status" value="1"/>
</dbReference>
<dbReference type="Gene3D" id="3.90.70.80">
    <property type="match status" value="1"/>
</dbReference>
<dbReference type="InterPro" id="IPR003323">
    <property type="entry name" value="OTU_dom"/>
</dbReference>
<dbReference type="InterPro" id="IPR038765">
    <property type="entry name" value="Papain-like_cys_pep_sf"/>
</dbReference>
<dbReference type="InterPro" id="IPR050704">
    <property type="entry name" value="Peptidase_C85-like"/>
</dbReference>
<dbReference type="PANTHER" id="PTHR12419">
    <property type="entry name" value="OTU DOMAIN CONTAINING PROTEIN"/>
    <property type="match status" value="1"/>
</dbReference>
<dbReference type="PANTHER" id="PTHR12419:SF85">
    <property type="entry name" value="OVARIAN TUMOR DOMAIN-CONTAINING DEUBIQUITINATING ENZYME 11"/>
    <property type="match status" value="1"/>
</dbReference>
<dbReference type="Pfam" id="PF02338">
    <property type="entry name" value="OTU"/>
    <property type="match status" value="1"/>
</dbReference>
<dbReference type="SUPFAM" id="SSF54001">
    <property type="entry name" value="Cysteine proteinases"/>
    <property type="match status" value="1"/>
</dbReference>
<dbReference type="PROSITE" id="PS50802">
    <property type="entry name" value="OTU"/>
    <property type="match status" value="1"/>
</dbReference>
<sequence>MDENHRNPFANASTSARASGSTSASSNSSFSSSVADTDDDQTIARILAEDESLRREGKLGKRLSHLDSIPHTPRVNREIPDINDATLDHELLSGRLATYGLAELQMEGDGNCQFRALADQLFRNADYHKHVRKHVVKQLKQQRKLYEEYVPMKYRHYTRKMKKHGEWGDHVTLQAAADRFEAKICLVTSFRDQSYIEILPHNKNPLREAWLSFWSEVHYNSLYANGVLALPDVPTRKPRRKHWLF</sequence>